<sequence length="340" mass="37139">MHTDLDTDMDMDTETTALCPSGSRRASPPGTPTPEADATLLKKSEKLLAELDRSGLPSAPGAPRRRGSMPVPYKHQLRRAQAVDELDWPPQASSSGSSDSLGSGEAAPAQKDGIFKVMLVGESGVGKSTLAGTFGGLQGDSAHEPENPEDTYERRIMVDKEEVTLVVYDIWEQGDAGGWLRDHCLQTGDAFLIVFSVTDRRSFSKVPETLLRLRAGRPHHDLPVILVGNKSDLARSREVSLEEGRHLAGTLSCKHIETSAALHHNTRELFEGAVRQIRLRRGRNHAGGQRPDPGSPEGPAPPARRESLTKKAKRFLANLVPRNAKFFKQRSRSCHDLSVL</sequence>
<feature type="chain" id="PRO_0000122483" description="GTP-binding protein REM 2">
    <location>
        <begin position="1"/>
        <end position="340"/>
    </location>
</feature>
<feature type="region of interest" description="Disordered" evidence="2">
    <location>
        <begin position="1"/>
        <end position="107"/>
    </location>
</feature>
<feature type="region of interest" description="Disordered" evidence="2">
    <location>
        <begin position="283"/>
        <end position="308"/>
    </location>
</feature>
<feature type="compositionally biased region" description="Acidic residues" evidence="2">
    <location>
        <begin position="1"/>
        <end position="13"/>
    </location>
</feature>
<feature type="compositionally biased region" description="Basic and acidic residues" evidence="2">
    <location>
        <begin position="40"/>
        <end position="53"/>
    </location>
</feature>
<feature type="compositionally biased region" description="Low complexity" evidence="2">
    <location>
        <begin position="93"/>
        <end position="104"/>
    </location>
</feature>
<feature type="compositionally biased region" description="Pro residues" evidence="2">
    <location>
        <begin position="293"/>
        <end position="302"/>
    </location>
</feature>
<feature type="binding site" evidence="3">
    <location>
        <begin position="121"/>
        <end position="128"/>
    </location>
    <ligand>
        <name>GTP</name>
        <dbReference type="ChEBI" id="CHEBI:37565"/>
    </ligand>
</feature>
<feature type="binding site" evidence="3">
    <location>
        <begin position="229"/>
        <end position="232"/>
    </location>
    <ligand>
        <name>GTP</name>
        <dbReference type="ChEBI" id="CHEBI:37565"/>
    </ligand>
</feature>
<feature type="binding site" evidence="3">
    <location>
        <begin position="260"/>
        <end position="261"/>
    </location>
    <ligand>
        <name>GTP</name>
        <dbReference type="ChEBI" id="CHEBI:37565"/>
    </ligand>
</feature>
<feature type="modified residue" description="Phosphoserine" evidence="1">
    <location>
        <position position="27"/>
    </location>
</feature>
<feature type="modified residue" description="Phosphoserine" evidence="1">
    <location>
        <position position="295"/>
    </location>
</feature>
<feature type="splice variant" id="VSP_056922" description="In isoform 2." evidence="4">
    <original>EDTYERRIMVDKEEVTLVVYDIWEQGDAGGWLRDHCLQTGDAFLIVFSVTDRRSFSKVPETLLRLRAGRPHHD</original>
    <variation>GGCRRVAAGPLPSDRGRLSHRLLSHRPTEFLQSSRDPTSAPGWEAAPRPTRYPRWKQERLGPLPGGITGGCVS</variation>
    <location>
        <begin position="149"/>
        <end position="221"/>
    </location>
</feature>
<feature type="splice variant" id="VSP_056923" description="In isoform 2." evidence="4">
    <location>
        <begin position="222"/>
        <end position="340"/>
    </location>
</feature>
<feature type="sequence variant" id="VAR_055938" description="In dbSNP:rs8014119.">
    <original>G</original>
    <variation>A</variation>
    <location>
        <position position="96"/>
    </location>
</feature>
<feature type="strand" evidence="6">
    <location>
        <begin position="114"/>
        <end position="120"/>
    </location>
</feature>
<feature type="helix" evidence="6">
    <location>
        <begin position="127"/>
        <end position="133"/>
    </location>
</feature>
<feature type="helix" evidence="6">
    <location>
        <begin position="141"/>
        <end position="143"/>
    </location>
</feature>
<feature type="turn" evidence="6">
    <location>
        <begin position="144"/>
        <end position="146"/>
    </location>
</feature>
<feature type="strand" evidence="6">
    <location>
        <begin position="151"/>
        <end position="158"/>
    </location>
</feature>
<feature type="strand" evidence="6">
    <location>
        <begin position="161"/>
        <end position="168"/>
    </location>
</feature>
<feature type="helix" evidence="6">
    <location>
        <begin position="175"/>
        <end position="177"/>
    </location>
</feature>
<feature type="helix" evidence="6">
    <location>
        <begin position="178"/>
        <end position="187"/>
    </location>
</feature>
<feature type="strand" evidence="6">
    <location>
        <begin position="189"/>
        <end position="196"/>
    </location>
</feature>
<feature type="helix" evidence="6">
    <location>
        <begin position="200"/>
        <end position="204"/>
    </location>
</feature>
<feature type="helix" evidence="6">
    <location>
        <begin position="206"/>
        <end position="216"/>
    </location>
</feature>
<feature type="strand" evidence="6">
    <location>
        <begin position="224"/>
        <end position="229"/>
    </location>
</feature>
<feature type="turn" evidence="6">
    <location>
        <begin position="234"/>
        <end position="236"/>
    </location>
</feature>
<feature type="helix" evidence="6">
    <location>
        <begin position="241"/>
        <end position="250"/>
    </location>
</feature>
<feature type="strand" evidence="6">
    <location>
        <begin position="254"/>
        <end position="259"/>
    </location>
</feature>
<feature type="turn" evidence="6">
    <location>
        <begin position="260"/>
        <end position="263"/>
    </location>
</feature>
<feature type="helix" evidence="6">
    <location>
        <begin position="266"/>
        <end position="278"/>
    </location>
</feature>
<keyword id="KW-0002">3D-structure</keyword>
<keyword id="KW-0025">Alternative splicing</keyword>
<keyword id="KW-1003">Cell membrane</keyword>
<keyword id="KW-0342">GTP-binding</keyword>
<keyword id="KW-0472">Membrane</keyword>
<keyword id="KW-0547">Nucleotide-binding</keyword>
<keyword id="KW-0597">Phosphoprotein</keyword>
<keyword id="KW-1267">Proteomics identification</keyword>
<keyword id="KW-1185">Reference proteome</keyword>
<accession>Q8IYK8</accession>
<accession>B7Z5P1</accession>
<accession>Q8N8R8</accession>
<reference key="1">
    <citation type="journal article" date="2004" name="Nat. Genet.">
        <title>Complete sequencing and characterization of 21,243 full-length human cDNAs.</title>
        <authorList>
            <person name="Ota T."/>
            <person name="Suzuki Y."/>
            <person name="Nishikawa T."/>
            <person name="Otsuki T."/>
            <person name="Sugiyama T."/>
            <person name="Irie R."/>
            <person name="Wakamatsu A."/>
            <person name="Hayashi K."/>
            <person name="Sato H."/>
            <person name="Nagai K."/>
            <person name="Kimura K."/>
            <person name="Makita H."/>
            <person name="Sekine M."/>
            <person name="Obayashi M."/>
            <person name="Nishi T."/>
            <person name="Shibahara T."/>
            <person name="Tanaka T."/>
            <person name="Ishii S."/>
            <person name="Yamamoto J."/>
            <person name="Saito K."/>
            <person name="Kawai Y."/>
            <person name="Isono Y."/>
            <person name="Nakamura Y."/>
            <person name="Nagahari K."/>
            <person name="Murakami K."/>
            <person name="Yasuda T."/>
            <person name="Iwayanagi T."/>
            <person name="Wagatsuma M."/>
            <person name="Shiratori A."/>
            <person name="Sudo H."/>
            <person name="Hosoiri T."/>
            <person name="Kaku Y."/>
            <person name="Kodaira H."/>
            <person name="Kondo H."/>
            <person name="Sugawara M."/>
            <person name="Takahashi M."/>
            <person name="Kanda K."/>
            <person name="Yokoi T."/>
            <person name="Furuya T."/>
            <person name="Kikkawa E."/>
            <person name="Omura Y."/>
            <person name="Abe K."/>
            <person name="Kamihara K."/>
            <person name="Katsuta N."/>
            <person name="Sato K."/>
            <person name="Tanikawa M."/>
            <person name="Yamazaki M."/>
            <person name="Ninomiya K."/>
            <person name="Ishibashi T."/>
            <person name="Yamashita H."/>
            <person name="Murakawa K."/>
            <person name="Fujimori K."/>
            <person name="Tanai H."/>
            <person name="Kimata M."/>
            <person name="Watanabe M."/>
            <person name="Hiraoka S."/>
            <person name="Chiba Y."/>
            <person name="Ishida S."/>
            <person name="Ono Y."/>
            <person name="Takiguchi S."/>
            <person name="Watanabe S."/>
            <person name="Yosida M."/>
            <person name="Hotuta T."/>
            <person name="Kusano J."/>
            <person name="Kanehori K."/>
            <person name="Takahashi-Fujii A."/>
            <person name="Hara H."/>
            <person name="Tanase T.-O."/>
            <person name="Nomura Y."/>
            <person name="Togiya S."/>
            <person name="Komai F."/>
            <person name="Hara R."/>
            <person name="Takeuchi K."/>
            <person name="Arita M."/>
            <person name="Imose N."/>
            <person name="Musashino K."/>
            <person name="Yuuki H."/>
            <person name="Oshima A."/>
            <person name="Sasaki N."/>
            <person name="Aotsuka S."/>
            <person name="Yoshikawa Y."/>
            <person name="Matsunawa H."/>
            <person name="Ichihara T."/>
            <person name="Shiohata N."/>
            <person name="Sano S."/>
            <person name="Moriya S."/>
            <person name="Momiyama H."/>
            <person name="Satoh N."/>
            <person name="Takami S."/>
            <person name="Terashima Y."/>
            <person name="Suzuki O."/>
            <person name="Nakagawa S."/>
            <person name="Senoh A."/>
            <person name="Mizoguchi H."/>
            <person name="Goto Y."/>
            <person name="Shimizu F."/>
            <person name="Wakebe H."/>
            <person name="Hishigaki H."/>
            <person name="Watanabe T."/>
            <person name="Sugiyama A."/>
            <person name="Takemoto M."/>
            <person name="Kawakami B."/>
            <person name="Yamazaki M."/>
            <person name="Watanabe K."/>
            <person name="Kumagai A."/>
            <person name="Itakura S."/>
            <person name="Fukuzumi Y."/>
            <person name="Fujimori Y."/>
            <person name="Komiyama M."/>
            <person name="Tashiro H."/>
            <person name="Tanigami A."/>
            <person name="Fujiwara T."/>
            <person name="Ono T."/>
            <person name="Yamada K."/>
            <person name="Fujii Y."/>
            <person name="Ozaki K."/>
            <person name="Hirao M."/>
            <person name="Ohmori Y."/>
            <person name="Kawabata A."/>
            <person name="Hikiji T."/>
            <person name="Kobatake N."/>
            <person name="Inagaki H."/>
            <person name="Ikema Y."/>
            <person name="Okamoto S."/>
            <person name="Okitani R."/>
            <person name="Kawakami T."/>
            <person name="Noguchi S."/>
            <person name="Itoh T."/>
            <person name="Shigeta K."/>
            <person name="Senba T."/>
            <person name="Matsumura K."/>
            <person name="Nakajima Y."/>
            <person name="Mizuno T."/>
            <person name="Morinaga M."/>
            <person name="Sasaki M."/>
            <person name="Togashi T."/>
            <person name="Oyama M."/>
            <person name="Hata H."/>
            <person name="Watanabe M."/>
            <person name="Komatsu T."/>
            <person name="Mizushima-Sugano J."/>
            <person name="Satoh T."/>
            <person name="Shirai Y."/>
            <person name="Takahashi Y."/>
            <person name="Nakagawa K."/>
            <person name="Okumura K."/>
            <person name="Nagase T."/>
            <person name="Nomura N."/>
            <person name="Kikuchi H."/>
            <person name="Masuho Y."/>
            <person name="Yamashita R."/>
            <person name="Nakai K."/>
            <person name="Yada T."/>
            <person name="Nakamura Y."/>
            <person name="Ohara O."/>
            <person name="Isogai T."/>
            <person name="Sugano S."/>
        </authorList>
    </citation>
    <scope>NUCLEOTIDE SEQUENCE [LARGE SCALE MRNA] (ISOFORMS 1 AND 2)</scope>
</reference>
<reference key="2">
    <citation type="journal article" date="2003" name="Nature">
        <title>The DNA sequence and analysis of human chromosome 14.</title>
        <authorList>
            <person name="Heilig R."/>
            <person name="Eckenberg R."/>
            <person name="Petit J.-L."/>
            <person name="Fonknechten N."/>
            <person name="Da Silva C."/>
            <person name="Cattolico L."/>
            <person name="Levy M."/>
            <person name="Barbe V."/>
            <person name="De Berardinis V."/>
            <person name="Ureta-Vidal A."/>
            <person name="Pelletier E."/>
            <person name="Vico V."/>
            <person name="Anthouard V."/>
            <person name="Rowen L."/>
            <person name="Madan A."/>
            <person name="Qin S."/>
            <person name="Sun H."/>
            <person name="Du H."/>
            <person name="Pepin K."/>
            <person name="Artiguenave F."/>
            <person name="Robert C."/>
            <person name="Cruaud C."/>
            <person name="Bruels T."/>
            <person name="Jaillon O."/>
            <person name="Friedlander L."/>
            <person name="Samson G."/>
            <person name="Brottier P."/>
            <person name="Cure S."/>
            <person name="Segurens B."/>
            <person name="Aniere F."/>
            <person name="Samain S."/>
            <person name="Crespeau H."/>
            <person name="Abbasi N."/>
            <person name="Aiach N."/>
            <person name="Boscus D."/>
            <person name="Dickhoff R."/>
            <person name="Dors M."/>
            <person name="Dubois I."/>
            <person name="Friedman C."/>
            <person name="Gouyvenoux M."/>
            <person name="James R."/>
            <person name="Madan A."/>
            <person name="Mairey-Estrada B."/>
            <person name="Mangenot S."/>
            <person name="Martins N."/>
            <person name="Menard M."/>
            <person name="Oztas S."/>
            <person name="Ratcliffe A."/>
            <person name="Shaffer T."/>
            <person name="Trask B."/>
            <person name="Vacherie B."/>
            <person name="Bellemere C."/>
            <person name="Belser C."/>
            <person name="Besnard-Gonnet M."/>
            <person name="Bartol-Mavel D."/>
            <person name="Boutard M."/>
            <person name="Briez-Silla S."/>
            <person name="Combette S."/>
            <person name="Dufosse-Laurent V."/>
            <person name="Ferron C."/>
            <person name="Lechaplais C."/>
            <person name="Louesse C."/>
            <person name="Muselet D."/>
            <person name="Magdelenat G."/>
            <person name="Pateau E."/>
            <person name="Petit E."/>
            <person name="Sirvain-Trukniewicz P."/>
            <person name="Trybou A."/>
            <person name="Vega-Czarny N."/>
            <person name="Bataille E."/>
            <person name="Bluet E."/>
            <person name="Bordelais I."/>
            <person name="Dubois M."/>
            <person name="Dumont C."/>
            <person name="Guerin T."/>
            <person name="Haffray S."/>
            <person name="Hammadi R."/>
            <person name="Muanga J."/>
            <person name="Pellouin V."/>
            <person name="Robert D."/>
            <person name="Wunderle E."/>
            <person name="Gauguet G."/>
            <person name="Roy A."/>
            <person name="Sainte-Marthe L."/>
            <person name="Verdier J."/>
            <person name="Verdier-Discala C."/>
            <person name="Hillier L.W."/>
            <person name="Fulton L."/>
            <person name="McPherson J."/>
            <person name="Matsuda F."/>
            <person name="Wilson R."/>
            <person name="Scarpelli C."/>
            <person name="Gyapay G."/>
            <person name="Wincker P."/>
            <person name="Saurin W."/>
            <person name="Quetier F."/>
            <person name="Waterston R."/>
            <person name="Hood L."/>
            <person name="Weissenbach J."/>
        </authorList>
    </citation>
    <scope>NUCLEOTIDE SEQUENCE [LARGE SCALE GENOMIC DNA]</scope>
</reference>
<reference key="3">
    <citation type="journal article" date="2004" name="Genome Res.">
        <title>The status, quality, and expansion of the NIH full-length cDNA project: the Mammalian Gene Collection (MGC).</title>
        <authorList>
            <consortium name="The MGC Project Team"/>
        </authorList>
    </citation>
    <scope>NUCLEOTIDE SEQUENCE [LARGE SCALE MRNA] (ISOFORM 1)</scope>
    <source>
        <tissue>Ovary</tissue>
    </source>
</reference>
<reference key="4">
    <citation type="submission" date="2009-02" db="PDB data bank">
        <title>Crystal structure of the human rem2 GTPase with bound GDP.</title>
        <authorList>
            <consortium name="Structural genomics consortium (SGC)"/>
        </authorList>
    </citation>
    <scope>X-RAY CRYSTALLOGRAPHY (1.82 ANGSTROMS) OF 110-286 IN COMPLEX WITH GDP</scope>
</reference>
<name>REM2_HUMAN</name>
<evidence type="ECO:0000250" key="1">
    <source>
        <dbReference type="UniProtKB" id="Q9WTY2"/>
    </source>
</evidence>
<evidence type="ECO:0000256" key="2">
    <source>
        <dbReference type="SAM" id="MobiDB-lite"/>
    </source>
</evidence>
<evidence type="ECO:0000269" key="3">
    <source ref="4"/>
</evidence>
<evidence type="ECO:0000303" key="4">
    <source>
    </source>
</evidence>
<evidence type="ECO:0000305" key="5"/>
<evidence type="ECO:0007829" key="6">
    <source>
        <dbReference type="PDB" id="3CBQ"/>
    </source>
</evidence>
<gene>
    <name type="primary">REM2</name>
</gene>
<proteinExistence type="evidence at protein level"/>
<protein>
    <recommendedName>
        <fullName>GTP-binding protein REM 2</fullName>
    </recommendedName>
    <alternativeName>
        <fullName>Rad and Gem-like GTP-binding protein 2</fullName>
    </alternativeName>
</protein>
<comment type="function">
    <text evidence="1">Binds GTP saturably and exhibits a low intrinsic rate of GTP hydrolysis.</text>
</comment>
<comment type="interaction">
    <interactant intactId="EBI-11304833">
        <id>Q8IYK8</id>
    </interactant>
    <interactant intactId="EBI-3867333">
        <id>A8MQ03</id>
        <label>CYSRT1</label>
    </interactant>
    <organismsDiffer>false</organismsDiffer>
    <experiments>3</experiments>
</comment>
<comment type="interaction">
    <interactant intactId="EBI-11304833">
        <id>Q8IYK8</id>
    </interactant>
    <interactant intactId="EBI-11959885">
        <id>Q07627</id>
        <label>KRTAP1-1</label>
    </interactant>
    <organismsDiffer>false</organismsDiffer>
    <experiments>3</experiments>
</comment>
<comment type="subcellular location">
    <subcellularLocation>
        <location evidence="1">Cell membrane</location>
    </subcellularLocation>
</comment>
<comment type="alternative products">
    <event type="alternative splicing"/>
    <isoform>
        <id>Q8IYK8-1</id>
        <name>1</name>
        <sequence type="displayed"/>
    </isoform>
    <isoform>
        <id>Q8IYK8-2</id>
        <name>2</name>
        <sequence type="described" ref="VSP_056922 VSP_056923"/>
    </isoform>
</comment>
<comment type="similarity">
    <text evidence="5">Belongs to the small GTPase superfamily. RGK family.</text>
</comment>
<comment type="sequence caution" evidence="5">
    <conflict type="erroneous initiation">
        <sequence resource="EMBL-CDS" id="AAH35663"/>
    </conflict>
</comment>
<comment type="sequence caution" evidence="5">
    <conflict type="erroneous initiation">
        <sequence resource="EMBL-CDS" id="BAC04746"/>
    </conflict>
</comment>
<organism>
    <name type="scientific">Homo sapiens</name>
    <name type="common">Human</name>
    <dbReference type="NCBI Taxonomy" id="9606"/>
    <lineage>
        <taxon>Eukaryota</taxon>
        <taxon>Metazoa</taxon>
        <taxon>Chordata</taxon>
        <taxon>Craniata</taxon>
        <taxon>Vertebrata</taxon>
        <taxon>Euteleostomi</taxon>
        <taxon>Mammalia</taxon>
        <taxon>Eutheria</taxon>
        <taxon>Euarchontoglires</taxon>
        <taxon>Primates</taxon>
        <taxon>Haplorrhini</taxon>
        <taxon>Catarrhini</taxon>
        <taxon>Hominidae</taxon>
        <taxon>Homo</taxon>
    </lineage>
</organism>
<dbReference type="EMBL" id="AK096283">
    <property type="protein sequence ID" value="BAC04746.1"/>
    <property type="status" value="ALT_INIT"/>
    <property type="molecule type" value="mRNA"/>
</dbReference>
<dbReference type="EMBL" id="AK299238">
    <property type="protein sequence ID" value="BAH12977.1"/>
    <property type="molecule type" value="mRNA"/>
</dbReference>
<dbReference type="EMBL" id="AL135998">
    <property type="status" value="NOT_ANNOTATED_CDS"/>
    <property type="molecule type" value="Genomic_DNA"/>
</dbReference>
<dbReference type="EMBL" id="BC035663">
    <property type="protein sequence ID" value="AAH35663.1"/>
    <property type="status" value="ALT_INIT"/>
    <property type="molecule type" value="mRNA"/>
</dbReference>
<dbReference type="CCDS" id="CCDS45082.1">
    <molecule id="Q8IYK8-1"/>
</dbReference>
<dbReference type="RefSeq" id="NP_775798.2">
    <molecule id="Q8IYK8-1"/>
    <property type="nucleotide sequence ID" value="NM_173527.3"/>
</dbReference>
<dbReference type="PDB" id="3CBQ">
    <property type="method" value="X-ray"/>
    <property type="resolution" value="1.82 A"/>
    <property type="chains" value="A=110-286"/>
</dbReference>
<dbReference type="PDBsum" id="3CBQ"/>
<dbReference type="SMR" id="Q8IYK8"/>
<dbReference type="BioGRID" id="127778">
    <property type="interactions" value="3"/>
</dbReference>
<dbReference type="FunCoup" id="Q8IYK8">
    <property type="interactions" value="459"/>
</dbReference>
<dbReference type="IntAct" id="Q8IYK8">
    <property type="interactions" value="3"/>
</dbReference>
<dbReference type="STRING" id="9606.ENSP00000267396"/>
<dbReference type="GlyGen" id="Q8IYK8">
    <property type="glycosylation" value="1 site"/>
</dbReference>
<dbReference type="iPTMnet" id="Q8IYK8"/>
<dbReference type="PhosphoSitePlus" id="Q8IYK8"/>
<dbReference type="BioMuta" id="REM2"/>
<dbReference type="DMDM" id="290457655"/>
<dbReference type="jPOST" id="Q8IYK8"/>
<dbReference type="MassIVE" id="Q8IYK8"/>
<dbReference type="PaxDb" id="9606-ENSP00000267396"/>
<dbReference type="PeptideAtlas" id="Q8IYK8"/>
<dbReference type="ProteomicsDB" id="6706"/>
<dbReference type="ProteomicsDB" id="71193">
    <molecule id="Q8IYK8-1"/>
</dbReference>
<dbReference type="Antibodypedia" id="22314">
    <property type="antibodies" value="53 antibodies from 20 providers"/>
</dbReference>
<dbReference type="DNASU" id="161253"/>
<dbReference type="Ensembl" id="ENST00000267396.9">
    <molecule id="Q8IYK8-1"/>
    <property type="protein sequence ID" value="ENSP00000267396.4"/>
    <property type="gene ID" value="ENSG00000139890.10"/>
</dbReference>
<dbReference type="Ensembl" id="ENST00000536884.1">
    <molecule id="Q8IYK8-2"/>
    <property type="protein sequence ID" value="ENSP00000442774.1"/>
    <property type="gene ID" value="ENSG00000139890.10"/>
</dbReference>
<dbReference type="GeneID" id="161253"/>
<dbReference type="KEGG" id="hsa:161253"/>
<dbReference type="MANE-Select" id="ENST00000267396.9">
    <property type="protein sequence ID" value="ENSP00000267396.4"/>
    <property type="RefSeq nucleotide sequence ID" value="NM_173527.3"/>
    <property type="RefSeq protein sequence ID" value="NP_775798.2"/>
</dbReference>
<dbReference type="UCSC" id="uc001whf.2">
    <molecule id="Q8IYK8-1"/>
    <property type="organism name" value="human"/>
</dbReference>
<dbReference type="AGR" id="HGNC:20248"/>
<dbReference type="CTD" id="161253"/>
<dbReference type="DisGeNET" id="161253"/>
<dbReference type="GeneCards" id="REM2"/>
<dbReference type="HGNC" id="HGNC:20248">
    <property type="gene designation" value="REM2"/>
</dbReference>
<dbReference type="HPA" id="ENSG00000139890">
    <property type="expression patterns" value="Tissue enhanced (bone marrow, brain)"/>
</dbReference>
<dbReference type="neXtProt" id="NX_Q8IYK8"/>
<dbReference type="OpenTargets" id="ENSG00000139890"/>
<dbReference type="PharmGKB" id="PA134916581"/>
<dbReference type="VEuPathDB" id="HostDB:ENSG00000139890"/>
<dbReference type="eggNOG" id="KOG0395">
    <property type="taxonomic scope" value="Eukaryota"/>
</dbReference>
<dbReference type="GeneTree" id="ENSGT00940000160062"/>
<dbReference type="HOGENOM" id="CLU_041217_3_1_1"/>
<dbReference type="InParanoid" id="Q8IYK8"/>
<dbReference type="OMA" id="TFKCEFL"/>
<dbReference type="OrthoDB" id="5239715at2759"/>
<dbReference type="PAN-GO" id="Q8IYK8">
    <property type="GO annotations" value="3 GO annotations based on evolutionary models"/>
</dbReference>
<dbReference type="PhylomeDB" id="Q8IYK8"/>
<dbReference type="TreeFam" id="TF314379"/>
<dbReference type="BRENDA" id="3.4.23.15">
    <property type="organism ID" value="2681"/>
</dbReference>
<dbReference type="PathwayCommons" id="Q8IYK8"/>
<dbReference type="SignaLink" id="Q8IYK8"/>
<dbReference type="BioGRID-ORCS" id="161253">
    <property type="hits" value="11 hits in 1146 CRISPR screens"/>
</dbReference>
<dbReference type="EvolutionaryTrace" id="Q8IYK8"/>
<dbReference type="GenomeRNAi" id="161253"/>
<dbReference type="Pharos" id="Q8IYK8">
    <property type="development level" value="Tbio"/>
</dbReference>
<dbReference type="PRO" id="PR:Q8IYK8"/>
<dbReference type="Proteomes" id="UP000005640">
    <property type="component" value="Chromosome 14"/>
</dbReference>
<dbReference type="RNAct" id="Q8IYK8">
    <property type="molecule type" value="protein"/>
</dbReference>
<dbReference type="Bgee" id="ENSG00000139890">
    <property type="expression patterns" value="Expressed in blood and 93 other cell types or tissues"/>
</dbReference>
<dbReference type="GO" id="GO:0005886">
    <property type="term" value="C:plasma membrane"/>
    <property type="evidence" value="ECO:0000318"/>
    <property type="project" value="GO_Central"/>
</dbReference>
<dbReference type="GO" id="GO:0005246">
    <property type="term" value="F:calcium channel regulator activity"/>
    <property type="evidence" value="ECO:0000318"/>
    <property type="project" value="GO_Central"/>
</dbReference>
<dbReference type="GO" id="GO:0005525">
    <property type="term" value="F:GTP binding"/>
    <property type="evidence" value="ECO:0000318"/>
    <property type="project" value="GO_Central"/>
</dbReference>
<dbReference type="GO" id="GO:0003924">
    <property type="term" value="F:GTPase activity"/>
    <property type="evidence" value="ECO:0007669"/>
    <property type="project" value="Ensembl"/>
</dbReference>
<dbReference type="CDD" id="cd04148">
    <property type="entry name" value="RGK"/>
    <property type="match status" value="1"/>
</dbReference>
<dbReference type="FunFam" id="3.40.50.300:FF:001032">
    <property type="entry name" value="GTP-binding protein REM 2"/>
    <property type="match status" value="1"/>
</dbReference>
<dbReference type="Gene3D" id="3.40.50.300">
    <property type="entry name" value="P-loop containing nucleotide triphosphate hydrolases"/>
    <property type="match status" value="1"/>
</dbReference>
<dbReference type="InterPro" id="IPR027417">
    <property type="entry name" value="P-loop_NTPase"/>
</dbReference>
<dbReference type="InterPro" id="IPR051641">
    <property type="entry name" value="RGK_GTP-binding_reg"/>
</dbReference>
<dbReference type="InterPro" id="IPR025662">
    <property type="entry name" value="Sigma_54_int_dom_ATP-bd_1"/>
</dbReference>
<dbReference type="InterPro" id="IPR001806">
    <property type="entry name" value="Small_GTPase"/>
</dbReference>
<dbReference type="PANTHER" id="PTHR45775:SF5">
    <property type="entry name" value="GTP-BINDING PROTEIN REM 2"/>
    <property type="match status" value="1"/>
</dbReference>
<dbReference type="PANTHER" id="PTHR45775">
    <property type="entry name" value="RAD, GEM/KIR FAMILY MEMBER 2, ISOFORM C"/>
    <property type="match status" value="1"/>
</dbReference>
<dbReference type="Pfam" id="PF00071">
    <property type="entry name" value="Ras"/>
    <property type="match status" value="1"/>
</dbReference>
<dbReference type="PRINTS" id="PR00449">
    <property type="entry name" value="RASTRNSFRMNG"/>
</dbReference>
<dbReference type="SMART" id="SM00175">
    <property type="entry name" value="RAB"/>
    <property type="match status" value="1"/>
</dbReference>
<dbReference type="SMART" id="SM00173">
    <property type="entry name" value="RAS"/>
    <property type="match status" value="1"/>
</dbReference>
<dbReference type="SMART" id="SM00174">
    <property type="entry name" value="RHO"/>
    <property type="match status" value="1"/>
</dbReference>
<dbReference type="SUPFAM" id="SSF52540">
    <property type="entry name" value="P-loop containing nucleoside triphosphate hydrolases"/>
    <property type="match status" value="1"/>
</dbReference>
<dbReference type="PROSITE" id="PS51421">
    <property type="entry name" value="RAS"/>
    <property type="match status" value="1"/>
</dbReference>